<proteinExistence type="inferred from homology"/>
<sequence length="317" mass="35651">MNVLLMAYGTPYAPEEVEPYYTDIRRGRRPSEELLKELAERYEAIGKSPLNEITLAQAVRLQALLNLEAPPYPKRLLGPFPPRAPHGPARVYVGTKHWHPSIGEAVAAMHEDGVRRAVAIVAAPHYSLRSVAEYREKVDSALKTLPEPIDFVWVESYEAHPGLIAAYARRLEEVIWRLKNPGKAAYVFTAHSIPLSAVEKGDPYPRQVEKTAELIAKKLALPRFHVAYQSAGRTPEPWLGPDINELLRTLKEEGYEEVAVQAVGFPADHLEVFYDLDLEAQATARELGLRLLRARSLNADLDYIQVLKDLVEAAWPR</sequence>
<accession>Q72L32</accession>
<gene>
    <name evidence="1" type="primary">hemH</name>
    <name type="ordered locus">TT_C0231</name>
</gene>
<dbReference type="EC" id="4.98.1.1" evidence="1"/>
<dbReference type="EMBL" id="AE017221">
    <property type="protein sequence ID" value="AAS80579.1"/>
    <property type="molecule type" value="Genomic_DNA"/>
</dbReference>
<dbReference type="RefSeq" id="WP_011172684.1">
    <property type="nucleotide sequence ID" value="NC_005835.1"/>
</dbReference>
<dbReference type="SMR" id="Q72L32"/>
<dbReference type="KEGG" id="tth:TT_C0231"/>
<dbReference type="eggNOG" id="COG0276">
    <property type="taxonomic scope" value="Bacteria"/>
</dbReference>
<dbReference type="HOGENOM" id="CLU_018884_2_1_0"/>
<dbReference type="OrthoDB" id="9776380at2"/>
<dbReference type="UniPathway" id="UPA00252">
    <property type="reaction ID" value="UER00325"/>
</dbReference>
<dbReference type="Proteomes" id="UP000000592">
    <property type="component" value="Chromosome"/>
</dbReference>
<dbReference type="GO" id="GO:0005737">
    <property type="term" value="C:cytoplasm"/>
    <property type="evidence" value="ECO:0007669"/>
    <property type="project" value="UniProtKB-SubCell"/>
</dbReference>
<dbReference type="GO" id="GO:0004325">
    <property type="term" value="F:ferrochelatase activity"/>
    <property type="evidence" value="ECO:0007669"/>
    <property type="project" value="UniProtKB-UniRule"/>
</dbReference>
<dbReference type="GO" id="GO:0046872">
    <property type="term" value="F:metal ion binding"/>
    <property type="evidence" value="ECO:0007669"/>
    <property type="project" value="UniProtKB-KW"/>
</dbReference>
<dbReference type="GO" id="GO:0006783">
    <property type="term" value="P:heme biosynthetic process"/>
    <property type="evidence" value="ECO:0007669"/>
    <property type="project" value="UniProtKB-UniRule"/>
</dbReference>
<dbReference type="CDD" id="cd00419">
    <property type="entry name" value="Ferrochelatase_C"/>
    <property type="match status" value="1"/>
</dbReference>
<dbReference type="CDD" id="cd03411">
    <property type="entry name" value="Ferrochelatase_N"/>
    <property type="match status" value="1"/>
</dbReference>
<dbReference type="Gene3D" id="3.40.50.1400">
    <property type="match status" value="2"/>
</dbReference>
<dbReference type="HAMAP" id="MF_00323">
    <property type="entry name" value="Ferrochelatase"/>
    <property type="match status" value="1"/>
</dbReference>
<dbReference type="InterPro" id="IPR001015">
    <property type="entry name" value="Ferrochelatase"/>
</dbReference>
<dbReference type="InterPro" id="IPR033644">
    <property type="entry name" value="Ferrochelatase_C"/>
</dbReference>
<dbReference type="InterPro" id="IPR033659">
    <property type="entry name" value="Ferrochelatase_N"/>
</dbReference>
<dbReference type="NCBIfam" id="TIGR00109">
    <property type="entry name" value="hemH"/>
    <property type="match status" value="1"/>
</dbReference>
<dbReference type="PANTHER" id="PTHR11108">
    <property type="entry name" value="FERROCHELATASE"/>
    <property type="match status" value="1"/>
</dbReference>
<dbReference type="PANTHER" id="PTHR11108:SF1">
    <property type="entry name" value="FERROCHELATASE, MITOCHONDRIAL"/>
    <property type="match status" value="1"/>
</dbReference>
<dbReference type="Pfam" id="PF00762">
    <property type="entry name" value="Ferrochelatase"/>
    <property type="match status" value="1"/>
</dbReference>
<dbReference type="SUPFAM" id="SSF53800">
    <property type="entry name" value="Chelatase"/>
    <property type="match status" value="1"/>
</dbReference>
<name>HEMH_THET2</name>
<organism>
    <name type="scientific">Thermus thermophilus (strain ATCC BAA-163 / DSM 7039 / HB27)</name>
    <dbReference type="NCBI Taxonomy" id="262724"/>
    <lineage>
        <taxon>Bacteria</taxon>
        <taxon>Thermotogati</taxon>
        <taxon>Deinococcota</taxon>
        <taxon>Deinococci</taxon>
        <taxon>Thermales</taxon>
        <taxon>Thermaceae</taxon>
        <taxon>Thermus</taxon>
    </lineage>
</organism>
<evidence type="ECO:0000255" key="1">
    <source>
        <dbReference type="HAMAP-Rule" id="MF_00323"/>
    </source>
</evidence>
<protein>
    <recommendedName>
        <fullName evidence="1">Ferrochelatase</fullName>
        <ecNumber evidence="1">4.98.1.1</ecNumber>
    </recommendedName>
    <alternativeName>
        <fullName evidence="1">Heme synthase</fullName>
    </alternativeName>
    <alternativeName>
        <fullName evidence="1">Protoheme ferro-lyase</fullName>
    </alternativeName>
</protein>
<reference key="1">
    <citation type="journal article" date="2004" name="Nat. Biotechnol.">
        <title>The genome sequence of the extreme thermophile Thermus thermophilus.</title>
        <authorList>
            <person name="Henne A."/>
            <person name="Brueggemann H."/>
            <person name="Raasch C."/>
            <person name="Wiezer A."/>
            <person name="Hartsch T."/>
            <person name="Liesegang H."/>
            <person name="Johann A."/>
            <person name="Lienard T."/>
            <person name="Gohl O."/>
            <person name="Martinez-Arias R."/>
            <person name="Jacobi C."/>
            <person name="Starkuviene V."/>
            <person name="Schlenczeck S."/>
            <person name="Dencker S."/>
            <person name="Huber R."/>
            <person name="Klenk H.-P."/>
            <person name="Kramer W."/>
            <person name="Merkl R."/>
            <person name="Gottschalk G."/>
            <person name="Fritz H.-J."/>
        </authorList>
    </citation>
    <scope>NUCLEOTIDE SEQUENCE [LARGE SCALE GENOMIC DNA]</scope>
    <source>
        <strain>ATCC BAA-163 / DSM 7039 / HB27</strain>
    </source>
</reference>
<keyword id="KW-0963">Cytoplasm</keyword>
<keyword id="KW-0350">Heme biosynthesis</keyword>
<keyword id="KW-0408">Iron</keyword>
<keyword id="KW-0456">Lyase</keyword>
<keyword id="KW-0479">Metal-binding</keyword>
<keyword id="KW-0627">Porphyrin biosynthesis</keyword>
<comment type="function">
    <text evidence="1">Catalyzes the ferrous insertion into protoporphyrin IX.</text>
</comment>
<comment type="catalytic activity">
    <reaction evidence="1">
        <text>heme b + 2 H(+) = protoporphyrin IX + Fe(2+)</text>
        <dbReference type="Rhea" id="RHEA:22584"/>
        <dbReference type="ChEBI" id="CHEBI:15378"/>
        <dbReference type="ChEBI" id="CHEBI:29033"/>
        <dbReference type="ChEBI" id="CHEBI:57306"/>
        <dbReference type="ChEBI" id="CHEBI:60344"/>
        <dbReference type="EC" id="4.98.1.1"/>
    </reaction>
</comment>
<comment type="pathway">
    <text evidence="1">Porphyrin-containing compound metabolism; protoheme biosynthesis; protoheme from protoporphyrin-IX: step 1/1.</text>
</comment>
<comment type="subcellular location">
    <subcellularLocation>
        <location evidence="1">Cytoplasm</location>
    </subcellularLocation>
</comment>
<comment type="similarity">
    <text evidence="1">Belongs to the ferrochelatase family.</text>
</comment>
<feature type="chain" id="PRO_0000175219" description="Ferrochelatase">
    <location>
        <begin position="1"/>
        <end position="317"/>
    </location>
</feature>
<feature type="binding site" evidence="1">
    <location>
        <position position="191"/>
    </location>
    <ligand>
        <name>Fe cation</name>
        <dbReference type="ChEBI" id="CHEBI:24875"/>
    </ligand>
</feature>
<feature type="binding site" evidence="1">
    <location>
        <position position="271"/>
    </location>
    <ligand>
        <name>Fe cation</name>
        <dbReference type="ChEBI" id="CHEBI:24875"/>
    </ligand>
</feature>